<dbReference type="EMBL" id="CU928164">
    <property type="protein sequence ID" value="CAR16155.1"/>
    <property type="molecule type" value="Genomic_DNA"/>
</dbReference>
<dbReference type="RefSeq" id="WP_001118464.1">
    <property type="nucleotide sequence ID" value="NC_011750.1"/>
</dbReference>
<dbReference type="RefSeq" id="YP_002406062.1">
    <property type="nucleotide sequence ID" value="NC_011750.1"/>
</dbReference>
<dbReference type="SMR" id="B7NHB7"/>
<dbReference type="STRING" id="585057.ECIAI39_0014"/>
<dbReference type="GeneID" id="93777428"/>
<dbReference type="KEGG" id="ect:ECIAI39_0014"/>
<dbReference type="PATRIC" id="fig|585057.6.peg.13"/>
<dbReference type="HOGENOM" id="CLU_017633_0_7_6"/>
<dbReference type="Proteomes" id="UP000000749">
    <property type="component" value="Chromosome"/>
</dbReference>
<dbReference type="GO" id="GO:0005737">
    <property type="term" value="C:cytoplasm"/>
    <property type="evidence" value="ECO:0007669"/>
    <property type="project" value="UniProtKB-SubCell"/>
</dbReference>
<dbReference type="GO" id="GO:0005524">
    <property type="term" value="F:ATP binding"/>
    <property type="evidence" value="ECO:0007669"/>
    <property type="project" value="InterPro"/>
</dbReference>
<dbReference type="GO" id="GO:0031072">
    <property type="term" value="F:heat shock protein binding"/>
    <property type="evidence" value="ECO:0007669"/>
    <property type="project" value="InterPro"/>
</dbReference>
<dbReference type="GO" id="GO:0051082">
    <property type="term" value="F:unfolded protein binding"/>
    <property type="evidence" value="ECO:0007669"/>
    <property type="project" value="UniProtKB-UniRule"/>
</dbReference>
<dbReference type="GO" id="GO:0008270">
    <property type="term" value="F:zinc ion binding"/>
    <property type="evidence" value="ECO:0007669"/>
    <property type="project" value="UniProtKB-UniRule"/>
</dbReference>
<dbReference type="GO" id="GO:0051085">
    <property type="term" value="P:chaperone cofactor-dependent protein refolding"/>
    <property type="evidence" value="ECO:0007669"/>
    <property type="project" value="TreeGrafter"/>
</dbReference>
<dbReference type="GO" id="GO:0006260">
    <property type="term" value="P:DNA replication"/>
    <property type="evidence" value="ECO:0007669"/>
    <property type="project" value="UniProtKB-KW"/>
</dbReference>
<dbReference type="GO" id="GO:0042026">
    <property type="term" value="P:protein refolding"/>
    <property type="evidence" value="ECO:0007669"/>
    <property type="project" value="TreeGrafter"/>
</dbReference>
<dbReference type="GO" id="GO:0009408">
    <property type="term" value="P:response to heat"/>
    <property type="evidence" value="ECO:0007669"/>
    <property type="project" value="InterPro"/>
</dbReference>
<dbReference type="CDD" id="cd06257">
    <property type="entry name" value="DnaJ"/>
    <property type="match status" value="1"/>
</dbReference>
<dbReference type="CDD" id="cd10747">
    <property type="entry name" value="DnaJ_C"/>
    <property type="match status" value="1"/>
</dbReference>
<dbReference type="CDD" id="cd10719">
    <property type="entry name" value="DnaJ_zf"/>
    <property type="match status" value="1"/>
</dbReference>
<dbReference type="FunFam" id="1.10.287.110:FF:000003">
    <property type="entry name" value="Molecular chaperone DnaJ"/>
    <property type="match status" value="1"/>
</dbReference>
<dbReference type="FunFam" id="2.10.230.10:FF:000002">
    <property type="entry name" value="Molecular chaperone DnaJ"/>
    <property type="match status" value="1"/>
</dbReference>
<dbReference type="FunFam" id="2.60.260.20:FF:000004">
    <property type="entry name" value="Molecular chaperone DnaJ"/>
    <property type="match status" value="1"/>
</dbReference>
<dbReference type="Gene3D" id="1.10.287.110">
    <property type="entry name" value="DnaJ domain"/>
    <property type="match status" value="1"/>
</dbReference>
<dbReference type="Gene3D" id="2.10.230.10">
    <property type="entry name" value="Heat shock protein DnaJ, cysteine-rich domain"/>
    <property type="match status" value="1"/>
</dbReference>
<dbReference type="Gene3D" id="2.60.260.20">
    <property type="entry name" value="Urease metallochaperone UreE, N-terminal domain"/>
    <property type="match status" value="2"/>
</dbReference>
<dbReference type="HAMAP" id="MF_01152">
    <property type="entry name" value="DnaJ"/>
    <property type="match status" value="1"/>
</dbReference>
<dbReference type="InterPro" id="IPR012724">
    <property type="entry name" value="DnaJ"/>
</dbReference>
<dbReference type="InterPro" id="IPR002939">
    <property type="entry name" value="DnaJ_C"/>
</dbReference>
<dbReference type="InterPro" id="IPR001623">
    <property type="entry name" value="DnaJ_domain"/>
</dbReference>
<dbReference type="InterPro" id="IPR018253">
    <property type="entry name" value="DnaJ_domain_CS"/>
</dbReference>
<dbReference type="InterPro" id="IPR008971">
    <property type="entry name" value="HSP40/DnaJ_pept-bd"/>
</dbReference>
<dbReference type="InterPro" id="IPR001305">
    <property type="entry name" value="HSP_DnaJ_Cys-rich_dom"/>
</dbReference>
<dbReference type="InterPro" id="IPR036410">
    <property type="entry name" value="HSP_DnaJ_Cys-rich_dom_sf"/>
</dbReference>
<dbReference type="InterPro" id="IPR036869">
    <property type="entry name" value="J_dom_sf"/>
</dbReference>
<dbReference type="NCBIfam" id="TIGR02349">
    <property type="entry name" value="DnaJ_bact"/>
    <property type="match status" value="1"/>
</dbReference>
<dbReference type="NCBIfam" id="NF008035">
    <property type="entry name" value="PRK10767.1"/>
    <property type="match status" value="1"/>
</dbReference>
<dbReference type="PANTHER" id="PTHR43096:SF48">
    <property type="entry name" value="CHAPERONE PROTEIN DNAJ"/>
    <property type="match status" value="1"/>
</dbReference>
<dbReference type="PANTHER" id="PTHR43096">
    <property type="entry name" value="DNAJ HOMOLOG 1, MITOCHONDRIAL-RELATED"/>
    <property type="match status" value="1"/>
</dbReference>
<dbReference type="Pfam" id="PF00226">
    <property type="entry name" value="DnaJ"/>
    <property type="match status" value="1"/>
</dbReference>
<dbReference type="Pfam" id="PF01556">
    <property type="entry name" value="DnaJ_C"/>
    <property type="match status" value="1"/>
</dbReference>
<dbReference type="Pfam" id="PF00684">
    <property type="entry name" value="DnaJ_CXXCXGXG"/>
    <property type="match status" value="1"/>
</dbReference>
<dbReference type="PRINTS" id="PR00625">
    <property type="entry name" value="JDOMAIN"/>
</dbReference>
<dbReference type="SMART" id="SM00271">
    <property type="entry name" value="DnaJ"/>
    <property type="match status" value="1"/>
</dbReference>
<dbReference type="SUPFAM" id="SSF46565">
    <property type="entry name" value="Chaperone J-domain"/>
    <property type="match status" value="1"/>
</dbReference>
<dbReference type="SUPFAM" id="SSF57938">
    <property type="entry name" value="DnaJ/Hsp40 cysteine-rich domain"/>
    <property type="match status" value="1"/>
</dbReference>
<dbReference type="SUPFAM" id="SSF49493">
    <property type="entry name" value="HSP40/DnaJ peptide-binding domain"/>
    <property type="match status" value="2"/>
</dbReference>
<dbReference type="PROSITE" id="PS00636">
    <property type="entry name" value="DNAJ_1"/>
    <property type="match status" value="1"/>
</dbReference>
<dbReference type="PROSITE" id="PS50076">
    <property type="entry name" value="DNAJ_2"/>
    <property type="match status" value="1"/>
</dbReference>
<dbReference type="PROSITE" id="PS51188">
    <property type="entry name" value="ZF_CR"/>
    <property type="match status" value="1"/>
</dbReference>
<gene>
    <name evidence="1" type="primary">dnaJ</name>
    <name type="ordered locus">ECIAI39_0014</name>
</gene>
<organism>
    <name type="scientific">Escherichia coli O7:K1 (strain IAI39 / ExPEC)</name>
    <dbReference type="NCBI Taxonomy" id="585057"/>
    <lineage>
        <taxon>Bacteria</taxon>
        <taxon>Pseudomonadati</taxon>
        <taxon>Pseudomonadota</taxon>
        <taxon>Gammaproteobacteria</taxon>
        <taxon>Enterobacterales</taxon>
        <taxon>Enterobacteriaceae</taxon>
        <taxon>Escherichia</taxon>
    </lineage>
</organism>
<keyword id="KW-0143">Chaperone</keyword>
<keyword id="KW-0963">Cytoplasm</keyword>
<keyword id="KW-0235">DNA replication</keyword>
<keyword id="KW-0479">Metal-binding</keyword>
<keyword id="KW-0677">Repeat</keyword>
<keyword id="KW-0346">Stress response</keyword>
<keyword id="KW-0862">Zinc</keyword>
<keyword id="KW-0863">Zinc-finger</keyword>
<feature type="chain" id="PRO_1000137684" description="Chaperone protein DnaJ">
    <location>
        <begin position="1"/>
        <end position="376"/>
    </location>
</feature>
<feature type="domain" description="J" evidence="1">
    <location>
        <begin position="5"/>
        <end position="70"/>
    </location>
</feature>
<feature type="repeat" description="CXXCXGXG motif">
    <location>
        <begin position="144"/>
        <end position="151"/>
    </location>
</feature>
<feature type="repeat" description="CXXCXGXG motif">
    <location>
        <begin position="161"/>
        <end position="168"/>
    </location>
</feature>
<feature type="repeat" description="CXXCXGXG motif">
    <location>
        <begin position="183"/>
        <end position="190"/>
    </location>
</feature>
<feature type="repeat" description="CXXCXGXG motif">
    <location>
        <begin position="197"/>
        <end position="204"/>
    </location>
</feature>
<feature type="zinc finger region" description="CR-type" evidence="1">
    <location>
        <begin position="131"/>
        <end position="209"/>
    </location>
</feature>
<feature type="binding site" evidence="1">
    <location>
        <position position="144"/>
    </location>
    <ligand>
        <name>Zn(2+)</name>
        <dbReference type="ChEBI" id="CHEBI:29105"/>
        <label>1</label>
    </ligand>
</feature>
<feature type="binding site" evidence="1">
    <location>
        <position position="147"/>
    </location>
    <ligand>
        <name>Zn(2+)</name>
        <dbReference type="ChEBI" id="CHEBI:29105"/>
        <label>1</label>
    </ligand>
</feature>
<feature type="binding site" evidence="1">
    <location>
        <position position="161"/>
    </location>
    <ligand>
        <name>Zn(2+)</name>
        <dbReference type="ChEBI" id="CHEBI:29105"/>
        <label>2</label>
    </ligand>
</feature>
<feature type="binding site" evidence="1">
    <location>
        <position position="164"/>
    </location>
    <ligand>
        <name>Zn(2+)</name>
        <dbReference type="ChEBI" id="CHEBI:29105"/>
        <label>2</label>
    </ligand>
</feature>
<feature type="binding site" evidence="1">
    <location>
        <position position="183"/>
    </location>
    <ligand>
        <name>Zn(2+)</name>
        <dbReference type="ChEBI" id="CHEBI:29105"/>
        <label>2</label>
    </ligand>
</feature>
<feature type="binding site" evidence="1">
    <location>
        <position position="186"/>
    </location>
    <ligand>
        <name>Zn(2+)</name>
        <dbReference type="ChEBI" id="CHEBI:29105"/>
        <label>2</label>
    </ligand>
</feature>
<feature type="binding site" evidence="1">
    <location>
        <position position="197"/>
    </location>
    <ligand>
        <name>Zn(2+)</name>
        <dbReference type="ChEBI" id="CHEBI:29105"/>
        <label>1</label>
    </ligand>
</feature>
<feature type="binding site" evidence="1">
    <location>
        <position position="200"/>
    </location>
    <ligand>
        <name>Zn(2+)</name>
        <dbReference type="ChEBI" id="CHEBI:29105"/>
        <label>1</label>
    </ligand>
</feature>
<evidence type="ECO:0000255" key="1">
    <source>
        <dbReference type="HAMAP-Rule" id="MF_01152"/>
    </source>
</evidence>
<protein>
    <recommendedName>
        <fullName evidence="1">Chaperone protein DnaJ</fullName>
    </recommendedName>
</protein>
<reference key="1">
    <citation type="journal article" date="2009" name="PLoS Genet.">
        <title>Organised genome dynamics in the Escherichia coli species results in highly diverse adaptive paths.</title>
        <authorList>
            <person name="Touchon M."/>
            <person name="Hoede C."/>
            <person name="Tenaillon O."/>
            <person name="Barbe V."/>
            <person name="Baeriswyl S."/>
            <person name="Bidet P."/>
            <person name="Bingen E."/>
            <person name="Bonacorsi S."/>
            <person name="Bouchier C."/>
            <person name="Bouvet O."/>
            <person name="Calteau A."/>
            <person name="Chiapello H."/>
            <person name="Clermont O."/>
            <person name="Cruveiller S."/>
            <person name="Danchin A."/>
            <person name="Diard M."/>
            <person name="Dossat C."/>
            <person name="Karoui M.E."/>
            <person name="Frapy E."/>
            <person name="Garry L."/>
            <person name="Ghigo J.M."/>
            <person name="Gilles A.M."/>
            <person name="Johnson J."/>
            <person name="Le Bouguenec C."/>
            <person name="Lescat M."/>
            <person name="Mangenot S."/>
            <person name="Martinez-Jehanne V."/>
            <person name="Matic I."/>
            <person name="Nassif X."/>
            <person name="Oztas S."/>
            <person name="Petit M.A."/>
            <person name="Pichon C."/>
            <person name="Rouy Z."/>
            <person name="Ruf C.S."/>
            <person name="Schneider D."/>
            <person name="Tourret J."/>
            <person name="Vacherie B."/>
            <person name="Vallenet D."/>
            <person name="Medigue C."/>
            <person name="Rocha E.P.C."/>
            <person name="Denamur E."/>
        </authorList>
    </citation>
    <scope>NUCLEOTIDE SEQUENCE [LARGE SCALE GENOMIC DNA]</scope>
    <source>
        <strain>IAI39 / ExPEC</strain>
    </source>
</reference>
<comment type="function">
    <text evidence="1">Participates actively in the response to hyperosmotic and heat shock by preventing the aggregation of stress-denatured proteins and by disaggregating proteins, also in an autonomous, DnaK-independent fashion. Unfolded proteins bind initially to DnaJ; upon interaction with the DnaJ-bound protein, DnaK hydrolyzes its bound ATP, resulting in the formation of a stable complex. GrpE releases ADP from DnaK; ATP binding to DnaK triggers the release of the substrate protein, thus completing the reaction cycle. Several rounds of ATP-dependent interactions between DnaJ, DnaK and GrpE are required for fully efficient folding. Also involved, together with DnaK and GrpE, in the DNA replication of plasmids through activation of initiation proteins.</text>
</comment>
<comment type="cofactor">
    <cofactor evidence="1">
        <name>Zn(2+)</name>
        <dbReference type="ChEBI" id="CHEBI:29105"/>
    </cofactor>
    <text evidence="1">Binds 2 Zn(2+) ions per monomer.</text>
</comment>
<comment type="subunit">
    <text evidence="1">Homodimer.</text>
</comment>
<comment type="subcellular location">
    <subcellularLocation>
        <location evidence="1">Cytoplasm</location>
    </subcellularLocation>
</comment>
<comment type="domain">
    <text evidence="1">The J domain is necessary and sufficient to stimulate DnaK ATPase activity. Zinc center 1 plays an important role in the autonomous, DnaK-independent chaperone activity of DnaJ. Zinc center 2 is essential for interaction with DnaK and for DnaJ activity.</text>
</comment>
<comment type="similarity">
    <text evidence="1">Belongs to the DnaJ family.</text>
</comment>
<accession>B7NHB7</accession>
<proteinExistence type="inferred from homology"/>
<sequence>MAKQDYYEILGVSKTAEEREIKKAYKRLAMKYHPDRNQGDKEAEAKFKEIKEAYEVLTDSQKRAAYDQYGHAAFEQGGMGGGGFGGGADFSDIFGDVFGDIFGGGRGRQRAARGADLRYNMELTLEEAVRGVTKEIRIPTLEECDVCHGSGAKPGTQPQTCPTCHGSGQVQMRQGFFAVQQTCPHCQGRGTLIKDPCNKCHGHGRVERSKTLSVKIPAGVDTGDRIRLAGEGEAGEHGAPAGDLYVQVQVKQHPIFEREGNNLYCEVPINFAMAALGGEIEVPTLDGRVKLKVPGETQTGKLFRMRGKGVKSVRGGAQGDLLCRVVVETPVGLNEKQKQLLQELQESFGGPTGEHNSPRSKSFFDGVKKFFDDLTR</sequence>
<name>DNAJ_ECO7I</name>